<dbReference type="EMBL" id="AP008971">
    <property type="protein sequence ID" value="BAG08124.1"/>
    <property type="molecule type" value="Genomic_DNA"/>
</dbReference>
<dbReference type="RefSeq" id="WP_002838265.1">
    <property type="nucleotide sequence ID" value="NC_010376.1"/>
</dbReference>
<dbReference type="SMR" id="B0S184"/>
<dbReference type="STRING" id="334413.FMG_0706"/>
<dbReference type="KEGG" id="fma:FMG_0706"/>
<dbReference type="eggNOG" id="COG0052">
    <property type="taxonomic scope" value="Bacteria"/>
</dbReference>
<dbReference type="HOGENOM" id="CLU_040318_1_2_9"/>
<dbReference type="Proteomes" id="UP000001319">
    <property type="component" value="Chromosome"/>
</dbReference>
<dbReference type="GO" id="GO:0022627">
    <property type="term" value="C:cytosolic small ribosomal subunit"/>
    <property type="evidence" value="ECO:0007669"/>
    <property type="project" value="TreeGrafter"/>
</dbReference>
<dbReference type="GO" id="GO:0003735">
    <property type="term" value="F:structural constituent of ribosome"/>
    <property type="evidence" value="ECO:0007669"/>
    <property type="project" value="InterPro"/>
</dbReference>
<dbReference type="GO" id="GO:0006412">
    <property type="term" value="P:translation"/>
    <property type="evidence" value="ECO:0007669"/>
    <property type="project" value="UniProtKB-UniRule"/>
</dbReference>
<dbReference type="CDD" id="cd01425">
    <property type="entry name" value="RPS2"/>
    <property type="match status" value="1"/>
</dbReference>
<dbReference type="FunFam" id="1.10.287.610:FF:000001">
    <property type="entry name" value="30S ribosomal protein S2"/>
    <property type="match status" value="1"/>
</dbReference>
<dbReference type="Gene3D" id="3.40.50.10490">
    <property type="entry name" value="Glucose-6-phosphate isomerase like protein, domain 1"/>
    <property type="match status" value="1"/>
</dbReference>
<dbReference type="Gene3D" id="1.10.287.610">
    <property type="entry name" value="Helix hairpin bin"/>
    <property type="match status" value="1"/>
</dbReference>
<dbReference type="HAMAP" id="MF_00291_B">
    <property type="entry name" value="Ribosomal_uS2_B"/>
    <property type="match status" value="1"/>
</dbReference>
<dbReference type="InterPro" id="IPR001865">
    <property type="entry name" value="Ribosomal_uS2"/>
</dbReference>
<dbReference type="InterPro" id="IPR005706">
    <property type="entry name" value="Ribosomal_uS2_bac/mit/plastid"/>
</dbReference>
<dbReference type="InterPro" id="IPR018130">
    <property type="entry name" value="Ribosomal_uS2_CS"/>
</dbReference>
<dbReference type="InterPro" id="IPR023591">
    <property type="entry name" value="Ribosomal_uS2_flav_dom_sf"/>
</dbReference>
<dbReference type="NCBIfam" id="TIGR01011">
    <property type="entry name" value="rpsB_bact"/>
    <property type="match status" value="1"/>
</dbReference>
<dbReference type="PANTHER" id="PTHR12534">
    <property type="entry name" value="30S RIBOSOMAL PROTEIN S2 PROKARYOTIC AND ORGANELLAR"/>
    <property type="match status" value="1"/>
</dbReference>
<dbReference type="PANTHER" id="PTHR12534:SF0">
    <property type="entry name" value="SMALL RIBOSOMAL SUBUNIT PROTEIN US2M"/>
    <property type="match status" value="1"/>
</dbReference>
<dbReference type="Pfam" id="PF00318">
    <property type="entry name" value="Ribosomal_S2"/>
    <property type="match status" value="1"/>
</dbReference>
<dbReference type="PRINTS" id="PR00395">
    <property type="entry name" value="RIBOSOMALS2"/>
</dbReference>
<dbReference type="SUPFAM" id="SSF52313">
    <property type="entry name" value="Ribosomal protein S2"/>
    <property type="match status" value="1"/>
</dbReference>
<dbReference type="PROSITE" id="PS00962">
    <property type="entry name" value="RIBOSOMAL_S2_1"/>
    <property type="match status" value="1"/>
</dbReference>
<dbReference type="PROSITE" id="PS00963">
    <property type="entry name" value="RIBOSOMAL_S2_2"/>
    <property type="match status" value="1"/>
</dbReference>
<comment type="similarity">
    <text evidence="1">Belongs to the universal ribosomal protein uS2 family.</text>
</comment>
<feature type="chain" id="PRO_1000115022" description="Small ribosomal subunit protein uS2">
    <location>
        <begin position="1"/>
        <end position="269"/>
    </location>
</feature>
<feature type="region of interest" description="Disordered" evidence="2">
    <location>
        <begin position="224"/>
        <end position="269"/>
    </location>
</feature>
<feature type="compositionally biased region" description="Acidic residues" evidence="2">
    <location>
        <begin position="230"/>
        <end position="269"/>
    </location>
</feature>
<reference key="1">
    <citation type="journal article" date="2008" name="DNA Res.">
        <title>Complete genome sequence of Finegoldia magna, an anaerobic opportunistic pathogen.</title>
        <authorList>
            <person name="Goto T."/>
            <person name="Yamashita A."/>
            <person name="Hirakawa H."/>
            <person name="Matsutani M."/>
            <person name="Todo K."/>
            <person name="Ohshima K."/>
            <person name="Toh H."/>
            <person name="Miyamoto K."/>
            <person name="Kuhara S."/>
            <person name="Hattori M."/>
            <person name="Shimizu T."/>
            <person name="Akimoto S."/>
        </authorList>
    </citation>
    <scope>NUCLEOTIDE SEQUENCE [LARGE SCALE GENOMIC DNA]</scope>
    <source>
        <strain>ATCC 29328 / DSM 20472 / WAL 2508</strain>
    </source>
</reference>
<organism>
    <name type="scientific">Finegoldia magna (strain ATCC 29328 / DSM 20472 / WAL 2508)</name>
    <name type="common">Peptostreptococcus magnus</name>
    <dbReference type="NCBI Taxonomy" id="334413"/>
    <lineage>
        <taxon>Bacteria</taxon>
        <taxon>Bacillati</taxon>
        <taxon>Bacillota</taxon>
        <taxon>Tissierellia</taxon>
        <taxon>Tissierellales</taxon>
        <taxon>Peptoniphilaceae</taxon>
        <taxon>Finegoldia</taxon>
    </lineage>
</organism>
<keyword id="KW-1185">Reference proteome</keyword>
<keyword id="KW-0687">Ribonucleoprotein</keyword>
<keyword id="KW-0689">Ribosomal protein</keyword>
<gene>
    <name evidence="1" type="primary">rpsB</name>
    <name type="ordered locus">FMG_0706</name>
</gene>
<evidence type="ECO:0000255" key="1">
    <source>
        <dbReference type="HAMAP-Rule" id="MF_00291"/>
    </source>
</evidence>
<evidence type="ECO:0000256" key="2">
    <source>
        <dbReference type="SAM" id="MobiDB-lite"/>
    </source>
</evidence>
<evidence type="ECO:0000305" key="3"/>
<sequence length="269" mass="30659">MSVVSMKSLLEAGVHFGHQTRRWNPKMSKFIFTERNGIYIIDLQKTVKQIDDAYNYVRDIVADGGEVLFVGTKKQAQEAIETEAKRCGQHFVSQRWLGGMLTNYKTIKTRINRLHKLYEMEEDGTFDLLPKKEVSQLEREREKLEKNLGGIRKMNKMPSVLFVVDPKKEYIAVHEAKILGIPVVGIVDTNCDPDELDIAIPGNDDAIRAVKLLTSTIADAVIEANQGREDSEDVYSETENDTEETDEELVSEEDLKEFVENSEEESDEE</sequence>
<accession>B0S184</accession>
<name>RS2_FINM2</name>
<proteinExistence type="inferred from homology"/>
<protein>
    <recommendedName>
        <fullName evidence="1">Small ribosomal subunit protein uS2</fullName>
    </recommendedName>
    <alternativeName>
        <fullName evidence="3">30S ribosomal protein S2</fullName>
    </alternativeName>
</protein>